<dbReference type="EMBL" id="U65676">
    <property type="protein sequence ID" value="AAB17869.1"/>
    <property type="molecule type" value="mRNA"/>
</dbReference>
<dbReference type="EMBL" id="U79136">
    <property type="protein sequence ID" value="AAB70662.1"/>
    <property type="molecule type" value="Genomic_DNA"/>
</dbReference>
<dbReference type="EMBL" id="U79123">
    <property type="protein sequence ID" value="AAB70662.1"/>
    <property type="status" value="JOINED"/>
    <property type="molecule type" value="Genomic_DNA"/>
</dbReference>
<dbReference type="EMBL" id="U79124">
    <property type="protein sequence ID" value="AAB70662.1"/>
    <property type="status" value="JOINED"/>
    <property type="molecule type" value="Genomic_DNA"/>
</dbReference>
<dbReference type="EMBL" id="U79125">
    <property type="protein sequence ID" value="AAB70662.1"/>
    <property type="status" value="JOINED"/>
    <property type="molecule type" value="Genomic_DNA"/>
</dbReference>
<dbReference type="EMBL" id="U79126">
    <property type="protein sequence ID" value="AAB70662.1"/>
    <property type="status" value="JOINED"/>
    <property type="molecule type" value="Genomic_DNA"/>
</dbReference>
<dbReference type="EMBL" id="U79127">
    <property type="protein sequence ID" value="AAB70662.1"/>
    <property type="status" value="JOINED"/>
    <property type="molecule type" value="Genomic_DNA"/>
</dbReference>
<dbReference type="EMBL" id="U79128">
    <property type="protein sequence ID" value="AAB70662.1"/>
    <property type="status" value="JOINED"/>
    <property type="molecule type" value="Genomic_DNA"/>
</dbReference>
<dbReference type="EMBL" id="U79129">
    <property type="protein sequence ID" value="AAB70662.1"/>
    <property type="status" value="JOINED"/>
    <property type="molecule type" value="Genomic_DNA"/>
</dbReference>
<dbReference type="EMBL" id="U79130">
    <property type="protein sequence ID" value="AAB70662.1"/>
    <property type="status" value="JOINED"/>
    <property type="molecule type" value="Genomic_DNA"/>
</dbReference>
<dbReference type="EMBL" id="U79131">
    <property type="protein sequence ID" value="AAB70662.1"/>
    <property type="status" value="JOINED"/>
    <property type="molecule type" value="Genomic_DNA"/>
</dbReference>
<dbReference type="EMBL" id="U79132">
    <property type="protein sequence ID" value="AAB70662.1"/>
    <property type="status" value="JOINED"/>
    <property type="molecule type" value="Genomic_DNA"/>
</dbReference>
<dbReference type="EMBL" id="U79133">
    <property type="protein sequence ID" value="AAB70662.1"/>
    <property type="status" value="JOINED"/>
    <property type="molecule type" value="Genomic_DNA"/>
</dbReference>
<dbReference type="EMBL" id="U79134">
    <property type="protein sequence ID" value="AAB70662.1"/>
    <property type="status" value="JOINED"/>
    <property type="molecule type" value="Genomic_DNA"/>
</dbReference>
<dbReference type="EMBL" id="U79135">
    <property type="protein sequence ID" value="AAB70662.1"/>
    <property type="status" value="JOINED"/>
    <property type="molecule type" value="Genomic_DNA"/>
</dbReference>
<dbReference type="EMBL" id="U96721">
    <property type="protein sequence ID" value="AAC52074.1"/>
    <property type="molecule type" value="mRNA"/>
</dbReference>
<dbReference type="EMBL" id="AF450133">
    <property type="protein sequence ID" value="AAL50684.1"/>
    <property type="molecule type" value="Genomic_DNA"/>
</dbReference>
<dbReference type="EMBL" id="AL139243">
    <property type="status" value="NOT_ANNOTATED_CDS"/>
    <property type="molecule type" value="Genomic_DNA"/>
</dbReference>
<dbReference type="EMBL" id="CH471066">
    <property type="protein sequence ID" value="EAW49882.1"/>
    <property type="molecule type" value="Genomic_DNA"/>
</dbReference>
<dbReference type="EMBL" id="BC000175">
    <property type="protein sequence ID" value="AAH00175.1"/>
    <property type="molecule type" value="mRNA"/>
</dbReference>
<dbReference type="CCDS" id="CCDS7475.1">
    <molecule id="Q92902-1"/>
</dbReference>
<dbReference type="CCDS" id="CCDS7476.1">
    <molecule id="Q92902-3"/>
</dbReference>
<dbReference type="CCDS" id="CCDS91316.1">
    <molecule id="Q92902-2"/>
</dbReference>
<dbReference type="RefSeq" id="NP_000186.2">
    <molecule id="Q92902-1"/>
    <property type="nucleotide sequence ID" value="NM_000195.4"/>
</dbReference>
<dbReference type="RefSeq" id="NP_001309405.1">
    <molecule id="Q92902-1"/>
    <property type="nucleotide sequence ID" value="NM_001322476.2"/>
</dbReference>
<dbReference type="RefSeq" id="NP_001309406.1">
    <molecule id="Q92902-1"/>
    <property type="nucleotide sequence ID" value="NM_001322477.2"/>
</dbReference>
<dbReference type="RefSeq" id="NP_001309407.1">
    <molecule id="Q92902-2"/>
    <property type="nucleotide sequence ID" value="NM_001322478.2"/>
</dbReference>
<dbReference type="RefSeq" id="NP_001309408.1">
    <molecule id="Q92902-2"/>
    <property type="nucleotide sequence ID" value="NM_001322479.2"/>
</dbReference>
<dbReference type="RefSeq" id="NP_872577.1">
    <molecule id="Q92902-3"/>
    <property type="nucleotide sequence ID" value="NM_182639.4"/>
</dbReference>
<dbReference type="RefSeq" id="XP_005269814.1">
    <molecule id="Q92902-1"/>
    <property type="nucleotide sequence ID" value="XM_005269757.5"/>
</dbReference>
<dbReference type="RefSeq" id="XP_047281102.1">
    <molecule id="Q92902-1"/>
    <property type="nucleotide sequence ID" value="XM_047425146.1"/>
</dbReference>
<dbReference type="RefSeq" id="XP_047281103.1">
    <molecule id="Q92902-1"/>
    <property type="nucleotide sequence ID" value="XM_047425147.1"/>
</dbReference>
<dbReference type="RefSeq" id="XP_054221679.1">
    <molecule id="Q92902-1"/>
    <property type="nucleotide sequence ID" value="XM_054365704.1"/>
</dbReference>
<dbReference type="RefSeq" id="XP_054221680.1">
    <molecule id="Q92902-1"/>
    <property type="nucleotide sequence ID" value="XM_054365705.1"/>
</dbReference>
<dbReference type="BioGRID" id="109494">
    <property type="interactions" value="11"/>
</dbReference>
<dbReference type="ComplexPortal" id="CPX-5043">
    <property type="entry name" value="BLOC-3 complex"/>
</dbReference>
<dbReference type="CORUM" id="Q92902"/>
<dbReference type="FunCoup" id="Q92902">
    <property type="interactions" value="759"/>
</dbReference>
<dbReference type="IntAct" id="Q92902">
    <property type="interactions" value="13"/>
</dbReference>
<dbReference type="STRING" id="9606.ENSP00000326649"/>
<dbReference type="GlyGen" id="Q92902">
    <property type="glycosylation" value="2 sites"/>
</dbReference>
<dbReference type="iPTMnet" id="Q92902"/>
<dbReference type="PhosphoSitePlus" id="Q92902"/>
<dbReference type="BioMuta" id="HPS1"/>
<dbReference type="DMDM" id="68067891"/>
<dbReference type="jPOST" id="Q92902"/>
<dbReference type="MassIVE" id="Q92902"/>
<dbReference type="PaxDb" id="9606-ENSP00000326649"/>
<dbReference type="PeptideAtlas" id="Q92902"/>
<dbReference type="ProteomicsDB" id="75584">
    <molecule id="Q92902-1"/>
</dbReference>
<dbReference type="ProteomicsDB" id="75585">
    <molecule id="Q92902-2"/>
</dbReference>
<dbReference type="ProteomicsDB" id="75586">
    <molecule id="Q92902-3"/>
</dbReference>
<dbReference type="ProteomicsDB" id="75587">
    <molecule id="Q92902-4"/>
</dbReference>
<dbReference type="Antibodypedia" id="45895">
    <property type="antibodies" value="121 antibodies from 28 providers"/>
</dbReference>
<dbReference type="DNASU" id="3257"/>
<dbReference type="Ensembl" id="ENST00000325103.10">
    <molecule id="Q92902-1"/>
    <property type="protein sequence ID" value="ENSP00000326649.6"/>
    <property type="gene ID" value="ENSG00000107521.21"/>
</dbReference>
<dbReference type="Ensembl" id="ENST00000338546.9">
    <molecule id="Q92902-3"/>
    <property type="protein sequence ID" value="ENSP00000343638.5"/>
    <property type="gene ID" value="ENSG00000107521.21"/>
</dbReference>
<dbReference type="Ensembl" id="ENST00000361490.9">
    <molecule id="Q92902-1"/>
    <property type="protein sequence ID" value="ENSP00000355310.4"/>
    <property type="gene ID" value="ENSG00000107521.21"/>
</dbReference>
<dbReference type="Ensembl" id="ENST00000699136.1">
    <molecule id="Q92902-2"/>
    <property type="protein sequence ID" value="ENSP00000514153.1"/>
    <property type="gene ID" value="ENSG00000107521.21"/>
</dbReference>
<dbReference type="Ensembl" id="ENST00000699140.1">
    <molecule id="Q92902-2"/>
    <property type="protein sequence ID" value="ENSP00000514157.1"/>
    <property type="gene ID" value="ENSG00000107521.21"/>
</dbReference>
<dbReference type="Ensembl" id="ENST00000699142.1">
    <molecule id="Q92902-1"/>
    <property type="protein sequence ID" value="ENSP00000514159.1"/>
    <property type="gene ID" value="ENSG00000107521.21"/>
</dbReference>
<dbReference type="Ensembl" id="ENST00000699145.1">
    <molecule id="Q92902-1"/>
    <property type="protein sequence ID" value="ENSP00000514162.1"/>
    <property type="gene ID" value="ENSG00000107521.21"/>
</dbReference>
<dbReference type="GeneID" id="3257"/>
<dbReference type="KEGG" id="hsa:3257"/>
<dbReference type="MANE-Select" id="ENST00000361490.9">
    <property type="protein sequence ID" value="ENSP00000355310.4"/>
    <property type="RefSeq nucleotide sequence ID" value="NM_000195.5"/>
    <property type="RefSeq protein sequence ID" value="NP_000186.2"/>
</dbReference>
<dbReference type="UCSC" id="uc001kpl.4">
    <molecule id="Q92902-1"/>
    <property type="organism name" value="human"/>
</dbReference>
<dbReference type="AGR" id="HGNC:5163"/>
<dbReference type="CTD" id="3257"/>
<dbReference type="DisGeNET" id="3257"/>
<dbReference type="GeneCards" id="HPS1"/>
<dbReference type="GeneReviews" id="HPS1"/>
<dbReference type="HGNC" id="HGNC:5163">
    <property type="gene designation" value="HPS1"/>
</dbReference>
<dbReference type="HPA" id="ENSG00000107521">
    <property type="expression patterns" value="Low tissue specificity"/>
</dbReference>
<dbReference type="MalaCards" id="HPS1"/>
<dbReference type="MIM" id="203300">
    <property type="type" value="phenotype"/>
</dbReference>
<dbReference type="MIM" id="604982">
    <property type="type" value="gene"/>
</dbReference>
<dbReference type="neXtProt" id="NX_Q92902"/>
<dbReference type="OpenTargets" id="ENSG00000107521"/>
<dbReference type="Orphanet" id="231500">
    <property type="disease" value="Hermansky-Pudlak syndrome due to BLOC-3 deficiency"/>
</dbReference>
<dbReference type="PharmGKB" id="PA35101"/>
<dbReference type="VEuPathDB" id="HostDB:ENSG00000107521"/>
<dbReference type="eggNOG" id="ENOG502QW8U">
    <property type="taxonomic scope" value="Eukaryota"/>
</dbReference>
<dbReference type="GeneTree" id="ENSGT00390000015298"/>
<dbReference type="HOGENOM" id="CLU_016960_1_0_1"/>
<dbReference type="InParanoid" id="Q92902"/>
<dbReference type="OMA" id="GLVHFMY"/>
<dbReference type="OrthoDB" id="10255234at2759"/>
<dbReference type="PAN-GO" id="Q92902">
    <property type="GO annotations" value="3 GO annotations based on evolutionary models"/>
</dbReference>
<dbReference type="PhylomeDB" id="Q92902"/>
<dbReference type="TreeFam" id="TF324374"/>
<dbReference type="PathwayCommons" id="Q92902"/>
<dbReference type="Reactome" id="R-HSA-8876198">
    <property type="pathway name" value="RAB GEFs exchange GTP for GDP on RABs"/>
</dbReference>
<dbReference type="SignaLink" id="Q92902"/>
<dbReference type="SIGNOR" id="Q92902"/>
<dbReference type="BioGRID-ORCS" id="3257">
    <property type="hits" value="12 hits in 1149 CRISPR screens"/>
</dbReference>
<dbReference type="ChiTaRS" id="HPS1">
    <property type="organism name" value="human"/>
</dbReference>
<dbReference type="GeneWiki" id="HPS1"/>
<dbReference type="GenomeRNAi" id="3257"/>
<dbReference type="Pharos" id="Q92902">
    <property type="development level" value="Tbio"/>
</dbReference>
<dbReference type="PRO" id="PR:Q92902"/>
<dbReference type="Proteomes" id="UP000005640">
    <property type="component" value="Chromosome 10"/>
</dbReference>
<dbReference type="RNAct" id="Q92902">
    <property type="molecule type" value="protein"/>
</dbReference>
<dbReference type="Bgee" id="ENSG00000107521">
    <property type="expression patterns" value="Expressed in granulocyte and 157 other cell types or tissues"/>
</dbReference>
<dbReference type="ExpressionAtlas" id="Q92902">
    <property type="expression patterns" value="baseline and differential"/>
</dbReference>
<dbReference type="GO" id="GO:0031085">
    <property type="term" value="C:BLOC-3 complex"/>
    <property type="evidence" value="ECO:0000353"/>
    <property type="project" value="UniProtKB"/>
</dbReference>
<dbReference type="GO" id="GO:0005737">
    <property type="term" value="C:cytoplasm"/>
    <property type="evidence" value="ECO:0000314"/>
    <property type="project" value="ComplexPortal"/>
</dbReference>
<dbReference type="GO" id="GO:0031410">
    <property type="term" value="C:cytoplasmic vesicle"/>
    <property type="evidence" value="ECO:0000314"/>
    <property type="project" value="MGI"/>
</dbReference>
<dbReference type="GO" id="GO:0005829">
    <property type="term" value="C:cytosol"/>
    <property type="evidence" value="ECO:0000304"/>
    <property type="project" value="Reactome"/>
</dbReference>
<dbReference type="GO" id="GO:0005764">
    <property type="term" value="C:lysosome"/>
    <property type="evidence" value="ECO:0000304"/>
    <property type="project" value="ProtInc"/>
</dbReference>
<dbReference type="GO" id="GO:0005085">
    <property type="term" value="F:guanyl-nucleotide exchange factor activity"/>
    <property type="evidence" value="ECO:0007669"/>
    <property type="project" value="UniProtKB-KW"/>
</dbReference>
<dbReference type="GO" id="GO:0046983">
    <property type="term" value="F:protein dimerization activity"/>
    <property type="evidence" value="ECO:0000353"/>
    <property type="project" value="UniProtKB"/>
</dbReference>
<dbReference type="GO" id="GO:0046907">
    <property type="term" value="P:intracellular transport"/>
    <property type="evidence" value="ECO:0000303"/>
    <property type="project" value="ComplexPortal"/>
</dbReference>
<dbReference type="GO" id="GO:0007040">
    <property type="term" value="P:lysosome organization"/>
    <property type="evidence" value="ECO:0000304"/>
    <property type="project" value="ProtInc"/>
</dbReference>
<dbReference type="GO" id="GO:1903232">
    <property type="term" value="P:melanosome assembly"/>
    <property type="evidence" value="ECO:0000314"/>
    <property type="project" value="UniProtKB"/>
</dbReference>
<dbReference type="GO" id="GO:0060155">
    <property type="term" value="P:platelet dense granule organization"/>
    <property type="evidence" value="ECO:0000303"/>
    <property type="project" value="ComplexPortal"/>
</dbReference>
<dbReference type="GO" id="GO:0016192">
    <property type="term" value="P:vesicle-mediated transport"/>
    <property type="evidence" value="ECO:0007669"/>
    <property type="project" value="InterPro"/>
</dbReference>
<dbReference type="GO" id="GO:0007601">
    <property type="term" value="P:visual perception"/>
    <property type="evidence" value="ECO:0007669"/>
    <property type="project" value="UniProtKB-KW"/>
</dbReference>
<dbReference type="InterPro" id="IPR043972">
    <property type="entry name" value="FUZ/MON1/HPS1_longin_1"/>
</dbReference>
<dbReference type="InterPro" id="IPR043971">
    <property type="entry name" value="FUZ/MON1/HPS1_longin_2"/>
</dbReference>
<dbReference type="InterPro" id="IPR043970">
    <property type="entry name" value="FUZ/MON1/HPS1_longin_3"/>
</dbReference>
<dbReference type="InterPro" id="IPR026053">
    <property type="entry name" value="HPS1"/>
</dbReference>
<dbReference type="PANTHER" id="PTHR12761:SF1">
    <property type="entry name" value="BLOC-3 COMPLEX MEMBER HPS1"/>
    <property type="match status" value="1"/>
</dbReference>
<dbReference type="PANTHER" id="PTHR12761">
    <property type="entry name" value="HERMANSKY-PUDLAK SYNDROME PROTEIN 1"/>
    <property type="match status" value="1"/>
</dbReference>
<dbReference type="Pfam" id="PF19036">
    <property type="entry name" value="Fuz_longin_1"/>
    <property type="match status" value="1"/>
</dbReference>
<dbReference type="Pfam" id="PF19037">
    <property type="entry name" value="Fuz_longin_2"/>
    <property type="match status" value="1"/>
</dbReference>
<dbReference type="Pfam" id="PF19038">
    <property type="entry name" value="Fuz_longin_3"/>
    <property type="match status" value="1"/>
</dbReference>
<feature type="chain" id="PRO_0000084047" description="BLOC-3 complex member HPS1">
    <location>
        <begin position="1"/>
        <end position="700"/>
    </location>
</feature>
<feature type="repeat" description="[DE]-X(4)-L-L 1">
    <location>
        <begin position="45"/>
        <end position="51"/>
    </location>
</feature>
<feature type="repeat" description="[DE]-X(4)-L-L 2">
    <location>
        <begin position="147"/>
        <end position="153"/>
    </location>
</feature>
<feature type="repeat" description="[DE]-X(4)-L-L 3">
    <location>
        <begin position="516"/>
        <end position="522"/>
    </location>
</feature>
<feature type="repeat" description="[DE]-X(4)-L-L 4">
    <location>
        <begin position="644"/>
        <end position="650"/>
    </location>
</feature>
<feature type="region of interest" description="Disordered" evidence="2">
    <location>
        <begin position="249"/>
        <end position="317"/>
    </location>
</feature>
<feature type="short sequence motif" description="Melanosome targeting signal" evidence="1">
    <location>
        <begin position="698"/>
        <end position="700"/>
    </location>
</feature>
<feature type="compositionally biased region" description="Polar residues" evidence="2">
    <location>
        <begin position="264"/>
        <end position="274"/>
    </location>
</feature>
<feature type="compositionally biased region" description="Low complexity" evidence="2">
    <location>
        <begin position="275"/>
        <end position="286"/>
    </location>
</feature>
<feature type="splice variant" id="VSP_004288" description="In isoform IV." evidence="8">
    <location>
        <begin position="114"/>
        <end position="133"/>
    </location>
</feature>
<feature type="splice variant" id="VSP_004289" description="In isoform II." evidence="8">
    <location>
        <begin position="257"/>
        <end position="289"/>
    </location>
</feature>
<feature type="splice variant" id="VSP_004290" description="In isoform III." evidence="6 7">
    <original>STIWLEGGTPP</original>
    <variation>EDRRKAGGNNS</variation>
    <location>
        <begin position="314"/>
        <end position="324"/>
    </location>
</feature>
<feature type="splice variant" id="VSP_004291" description="In isoform III." evidence="6 7">
    <location>
        <begin position="325"/>
        <end position="700"/>
    </location>
</feature>
<feature type="sequence variant" id="VAR_007950" description="In HPS1; mild." evidence="5">
    <location>
        <position position="55"/>
    </location>
</feature>
<feature type="sequence variant" id="VAR_014887" description="In dbSNP:rs1801285.">
    <original>E</original>
    <variation>D</variation>
    <location>
        <position position="100"/>
    </location>
</feature>
<feature type="sequence variant" id="VAR_014888" description="In dbSNP:rs1801286.">
    <original>A</original>
    <variation>V</variation>
    <location>
        <position position="186"/>
    </location>
</feature>
<feature type="sequence variant" id="VAR_005290" description="In dbSNP:rs11592273.">
    <original>G</original>
    <variation>W</variation>
    <location>
        <position position="283"/>
    </location>
</feature>
<feature type="sequence variant" id="VAR_038378" description="In dbSNP:rs17109853.">
    <original>A</original>
    <variation>T</variation>
    <location>
        <position position="480"/>
    </location>
</feature>
<feature type="sequence variant" id="VAR_005291" description="In dbSNP:rs2296434.">
    <original>P</original>
    <variation>R</variation>
    <location>
        <position position="491"/>
    </location>
</feature>
<feature type="sequence variant" id="VAR_005292" description="In dbSNP:rs2296436.">
    <original>Q</original>
    <variation>R</variation>
    <location>
        <position position="603"/>
    </location>
</feature>
<feature type="sequence variant" id="VAR_005293" description="In dbSNP:rs139061260.">
    <original>V</original>
    <variation>I</variation>
    <location>
        <position position="630"/>
    </location>
</feature>
<feature type="sequence conflict" description="In Ref. 3; AAC52074." evidence="8" ref="3">
    <original>D</original>
    <variation>H</variation>
    <location>
        <position position="254"/>
    </location>
</feature>
<feature type="sequence conflict" description="In Ref. 2; AAB70662." evidence="8" ref="2">
    <original>SYLED</original>
    <variation>Y</variation>
    <location>
        <begin position="533"/>
        <end position="537"/>
    </location>
</feature>
<name>HPS1_HUMAN</name>
<accession>Q92902</accession>
<accession>A8MRT2</accession>
<accession>O15402</accession>
<accession>O15502</accession>
<accession>Q5TAA3</accession>
<accession>Q8WXE5</accession>
<comment type="function">
    <text evidence="4">Component of the BLOC-3 complex, a complex that acts as a guanine exchange factor (GEF) for RAB32 and RAB38, promotes the exchange of GDP to GTP, converting them from an inactive GDP-bound form into an active GTP-bound form. The BLOC-3 complex plays an important role in the control of melanin production and melanosome biogenesis and promotes the membrane localization of RAB32 and RAB38 (PubMed:23084991).</text>
</comment>
<comment type="subunit">
    <text evidence="3 4">Component of the biogenesis of lysosome-related organelles complex-3 (or BLOC-3), a heterodimer of HPS1 and HPS4 (PubMed:20048159, PubMed:23084991). HPS1 cannot but BLOC-3 complex (heterodimer of HPS1 and HPS4) can interact with the GTP-bound form of RAB9A and RAB9B. HPS1 and BLOC-3 complex do not interact with the GDP-bound form of RAB9A and RAB9B (PubMed:20048159).</text>
</comment>
<comment type="interaction">
    <interactant intactId="EBI-704347">
        <id>Q92902</id>
    </interactant>
    <interactant intactId="EBI-704377">
        <id>Q9NQG7</id>
        <label>HPS4</label>
    </interactant>
    <organismsDiffer>false</organismsDiffer>
    <experiments>20</experiments>
</comment>
<comment type="alternative products">
    <event type="alternative splicing"/>
    <isoform>
        <id>Q92902-1</id>
        <name>I</name>
        <sequence type="displayed"/>
    </isoform>
    <isoform>
        <id>Q92902-2</id>
        <name>II</name>
        <sequence type="described" ref="VSP_004289"/>
    </isoform>
    <isoform>
        <id>Q92902-3</id>
        <name>III</name>
        <sequence type="described" ref="VSP_004290 VSP_004291"/>
    </isoform>
    <isoform>
        <id>Q92902-4</id>
        <name>IV</name>
        <sequence type="described" ref="VSP_004288"/>
    </isoform>
    <text>Additional isoforms seem to exist.</text>
</comment>
<comment type="tissue specificity">
    <text>Ubiquitous.</text>
</comment>
<comment type="disease" evidence="5">
    <disease id="DI-00557">
        <name>Hermansky-Pudlak syndrome 1</name>
        <acronym>HPS1</acronym>
        <description>A form of Hermansky-Pudlak syndrome, a genetically heterogeneous autosomal recessive disorder characterized by oculocutaneous albinism, bleeding due to platelet storage pool deficiency, and lysosomal storage defects. This syndrome results from defects of diverse cytoplasmic organelles including melanosomes, platelet dense granules and lysosomes. Ceroid storage in the lungs is associated with pulmonary fibrosis, a common cause of premature death in individuals with HPS.</description>
        <dbReference type="MIM" id="203300"/>
    </disease>
    <text>The disease is caused by variants affecting the gene represented in this entry.</text>
</comment>
<comment type="online information" name="Albinism database (ADB)">
    <link uri="http://www.ifpcs.org/albinism/hps1mut.html"/>
    <text>HPS1 mutations</text>
</comment>
<proteinExistence type="evidence at protein level"/>
<protein>
    <recommendedName>
        <fullName evidence="8">BLOC-3 complex member HPS1</fullName>
    </recommendedName>
    <alternativeName>
        <fullName>Hermansky-Pudlak syndrome 1 protein</fullName>
    </alternativeName>
</protein>
<sequence>MKCVLVATEGAEVLFYWTDQEFEESLRLKFGQSENEEEELPALEDQLSTLLAPVIISSMTMLEKLSDTYTCFSTENGNFLYVLHLFGECLFIAINGDHTESEGDLRRKLYVLKYLFEVHFGLVTVDGHLIRKELRPPDLAQRVQLWEHFQSLLWTYSRLREQEQCFAVEALERLIHPQLCELCIEALERHVIQAVNTSPERGGEEALHAFLLVHSKLLAFYSSHSASSLRPADLLALILLVQDLYPSESTAEDDIQPSPRRARSSQNIPVQQAWSPHSTGPTGGSSAETETDSFSLPEEYFTPAPSPGDQSSGSTIWLEGGTPPMDALQIAEDTLQTLVPHCPVPSGPRRIFLDANVKESYCPLVPHTMYCLPLWQGINLVLLTRSPSAPLALVLSQLMDGFSMLEKKLKEGPEPGASLRSQPLVGDLRQRMDKFVKNRGAQEIQSTWLEFKAKAFSKSEPGSSWELLQACGKLKRQLCAIYRLNFLTTAPSRGGPHLPQHLQDQVQRLMREKLTDWKDFLLVKSRRNITMVSYLEDFPGLVHFIYVDRTTGQMVAPSLNCSQKTSSELGKGPLAAFVKTKVWSLIQLARRYLQKGYTTLLFQEGDFYCSYFLWFENDMGYKLQMIEVPVLSDDSVPIGMLGGDYYRKLLRYYSKNRPTEAVRCYELLALHLSVIPTDLLVQQAGQLARRLWEASRIPLL</sequence>
<organism>
    <name type="scientific">Homo sapiens</name>
    <name type="common">Human</name>
    <dbReference type="NCBI Taxonomy" id="9606"/>
    <lineage>
        <taxon>Eukaryota</taxon>
        <taxon>Metazoa</taxon>
        <taxon>Chordata</taxon>
        <taxon>Craniata</taxon>
        <taxon>Vertebrata</taxon>
        <taxon>Euteleostomi</taxon>
        <taxon>Mammalia</taxon>
        <taxon>Eutheria</taxon>
        <taxon>Euarchontoglires</taxon>
        <taxon>Primates</taxon>
        <taxon>Haplorrhini</taxon>
        <taxon>Catarrhini</taxon>
        <taxon>Hominidae</taxon>
        <taxon>Homo</taxon>
    </lineage>
</organism>
<keyword id="KW-0015">Albinism</keyword>
<keyword id="KW-0025">Alternative splicing</keyword>
<keyword id="KW-0225">Disease variant</keyword>
<keyword id="KW-0344">Guanine-nucleotide releasing factor</keyword>
<keyword id="KW-0363">Hermansky-Pudlak syndrome</keyword>
<keyword id="KW-1267">Proteomics identification</keyword>
<keyword id="KW-1185">Reference proteome</keyword>
<keyword id="KW-0677">Repeat</keyword>
<keyword id="KW-0716">Sensory transduction</keyword>
<keyword id="KW-0844">Vision</keyword>
<evidence type="ECO:0000255" key="1"/>
<evidence type="ECO:0000256" key="2">
    <source>
        <dbReference type="SAM" id="MobiDB-lite"/>
    </source>
</evidence>
<evidence type="ECO:0000269" key="3">
    <source>
    </source>
</evidence>
<evidence type="ECO:0000269" key="4">
    <source>
    </source>
</evidence>
<evidence type="ECO:0000269" key="5">
    <source>
    </source>
</evidence>
<evidence type="ECO:0000303" key="6">
    <source>
    </source>
</evidence>
<evidence type="ECO:0000303" key="7">
    <source>
    </source>
</evidence>
<evidence type="ECO:0000305" key="8"/>
<gene>
    <name type="primary">HPS1</name>
    <name type="synonym">HPS</name>
</gene>
<reference key="1">
    <citation type="journal article" date="1996" name="Nat. Genet.">
        <title>Positional cloning of a gene for Hermansky-Pudlak syndrome, a disorder of cytoplasmic organelles.</title>
        <authorList>
            <person name="Oh J."/>
            <person name="Bailin T."/>
            <person name="Fukai K."/>
            <person name="Feng G.H."/>
            <person name="Ho L."/>
            <person name="Mao J.-I."/>
            <person name="Frenk E."/>
            <person name="Tamura N."/>
            <person name="Spritz R.A."/>
        </authorList>
    </citation>
    <scope>NUCLEOTIDE SEQUENCE [MRNA] (ISOFORM I)</scope>
    <scope>VARIANTS</scope>
</reference>
<reference key="2">
    <citation type="journal article" date="1997" name="J. Invest. Dermatol.">
        <title>Organization and nucleotide sequence of the human Hermansky-Pudlak syndrome (HPS) gene.</title>
        <authorList>
            <person name="Bailin T."/>
            <person name="Oh J."/>
            <person name="Feng G.H."/>
            <person name="Fukai K."/>
            <person name="Spritz R.A."/>
        </authorList>
    </citation>
    <scope>NUCLEOTIDE SEQUENCE [GENOMIC DNA] (ISOFORMS I; II AND IV)</scope>
    <scope>VARIANTS</scope>
</reference>
<reference key="3">
    <citation type="journal article" date="1998" name="J. Invest. Dermatol.">
        <title>Identification of a novel transcript produced by the gene responsible for the Hermansky-Pudlak syndrome in Puerto Rico.</title>
        <authorList>
            <person name="Wildenberg S.C."/>
            <person name="Fryer J.P."/>
            <person name="Gardner J.M."/>
            <person name="Oetting W.S."/>
            <person name="Brilliant M.H."/>
            <person name="King R.A."/>
        </authorList>
    </citation>
    <scope>NUCLEOTIDE SEQUENCE [MRNA] (ISOFORM III)</scope>
</reference>
<reference key="4">
    <citation type="journal article" date="2000" name="Hum. Genet.">
        <title>Characterization of a partial pseudogene homologous to the Hermansky-Pudlak syndrome gene HPS-1; relevance for mutation detection.</title>
        <authorList>
            <person name="Huizing M."/>
            <person name="Anikster Y."/>
            <person name="Gahl W.A."/>
        </authorList>
    </citation>
    <scope>NUCLEOTIDE SEQUENCE [GENOMIC DNA]</scope>
</reference>
<reference key="5">
    <citation type="journal article" date="2004" name="Nature">
        <title>The DNA sequence and comparative analysis of human chromosome 10.</title>
        <authorList>
            <person name="Deloukas P."/>
            <person name="Earthrowl M.E."/>
            <person name="Grafham D.V."/>
            <person name="Rubenfield M."/>
            <person name="French L."/>
            <person name="Steward C.A."/>
            <person name="Sims S.K."/>
            <person name="Jones M.C."/>
            <person name="Searle S."/>
            <person name="Scott C."/>
            <person name="Howe K."/>
            <person name="Hunt S.E."/>
            <person name="Andrews T.D."/>
            <person name="Gilbert J.G.R."/>
            <person name="Swarbreck D."/>
            <person name="Ashurst J.L."/>
            <person name="Taylor A."/>
            <person name="Battles J."/>
            <person name="Bird C.P."/>
            <person name="Ainscough R."/>
            <person name="Almeida J.P."/>
            <person name="Ashwell R.I.S."/>
            <person name="Ambrose K.D."/>
            <person name="Babbage A.K."/>
            <person name="Bagguley C.L."/>
            <person name="Bailey J."/>
            <person name="Banerjee R."/>
            <person name="Bates K."/>
            <person name="Beasley H."/>
            <person name="Bray-Allen S."/>
            <person name="Brown A.J."/>
            <person name="Brown J.Y."/>
            <person name="Burford D.C."/>
            <person name="Burrill W."/>
            <person name="Burton J."/>
            <person name="Cahill P."/>
            <person name="Camire D."/>
            <person name="Carter N.P."/>
            <person name="Chapman J.C."/>
            <person name="Clark S.Y."/>
            <person name="Clarke G."/>
            <person name="Clee C.M."/>
            <person name="Clegg S."/>
            <person name="Corby N."/>
            <person name="Coulson A."/>
            <person name="Dhami P."/>
            <person name="Dutta I."/>
            <person name="Dunn M."/>
            <person name="Faulkner L."/>
            <person name="Frankish A."/>
            <person name="Frankland J.A."/>
            <person name="Garner P."/>
            <person name="Garnett J."/>
            <person name="Gribble S."/>
            <person name="Griffiths C."/>
            <person name="Grocock R."/>
            <person name="Gustafson E."/>
            <person name="Hammond S."/>
            <person name="Harley J.L."/>
            <person name="Hart E."/>
            <person name="Heath P.D."/>
            <person name="Ho T.P."/>
            <person name="Hopkins B."/>
            <person name="Horne J."/>
            <person name="Howden P.J."/>
            <person name="Huckle E."/>
            <person name="Hynds C."/>
            <person name="Johnson C."/>
            <person name="Johnson D."/>
            <person name="Kana A."/>
            <person name="Kay M."/>
            <person name="Kimberley A.M."/>
            <person name="Kershaw J.K."/>
            <person name="Kokkinaki M."/>
            <person name="Laird G.K."/>
            <person name="Lawlor S."/>
            <person name="Lee H.M."/>
            <person name="Leongamornlert D.A."/>
            <person name="Laird G."/>
            <person name="Lloyd C."/>
            <person name="Lloyd D.M."/>
            <person name="Loveland J."/>
            <person name="Lovell J."/>
            <person name="McLaren S."/>
            <person name="McLay K.E."/>
            <person name="McMurray A."/>
            <person name="Mashreghi-Mohammadi M."/>
            <person name="Matthews L."/>
            <person name="Milne S."/>
            <person name="Nickerson T."/>
            <person name="Nguyen M."/>
            <person name="Overton-Larty E."/>
            <person name="Palmer S.A."/>
            <person name="Pearce A.V."/>
            <person name="Peck A.I."/>
            <person name="Pelan S."/>
            <person name="Phillimore B."/>
            <person name="Porter K."/>
            <person name="Rice C.M."/>
            <person name="Rogosin A."/>
            <person name="Ross M.T."/>
            <person name="Sarafidou T."/>
            <person name="Sehra H.K."/>
            <person name="Shownkeen R."/>
            <person name="Skuce C.D."/>
            <person name="Smith M."/>
            <person name="Standring L."/>
            <person name="Sycamore N."/>
            <person name="Tester J."/>
            <person name="Thorpe A."/>
            <person name="Torcasso W."/>
            <person name="Tracey A."/>
            <person name="Tromans A."/>
            <person name="Tsolas J."/>
            <person name="Wall M."/>
            <person name="Walsh J."/>
            <person name="Wang H."/>
            <person name="Weinstock K."/>
            <person name="West A.P."/>
            <person name="Willey D.L."/>
            <person name="Whitehead S.L."/>
            <person name="Wilming L."/>
            <person name="Wray P.W."/>
            <person name="Young L."/>
            <person name="Chen Y."/>
            <person name="Lovering R.C."/>
            <person name="Moschonas N.K."/>
            <person name="Siebert R."/>
            <person name="Fechtel K."/>
            <person name="Bentley D."/>
            <person name="Durbin R.M."/>
            <person name="Hubbard T."/>
            <person name="Doucette-Stamm L."/>
            <person name="Beck S."/>
            <person name="Smith D.R."/>
            <person name="Rogers J."/>
        </authorList>
    </citation>
    <scope>NUCLEOTIDE SEQUENCE [LARGE SCALE GENOMIC DNA]</scope>
</reference>
<reference key="6">
    <citation type="submission" date="2005-09" db="EMBL/GenBank/DDBJ databases">
        <authorList>
            <person name="Mural R.J."/>
            <person name="Istrail S."/>
            <person name="Sutton G.G."/>
            <person name="Florea L."/>
            <person name="Halpern A.L."/>
            <person name="Mobarry C.M."/>
            <person name="Lippert R."/>
            <person name="Walenz B."/>
            <person name="Shatkay H."/>
            <person name="Dew I."/>
            <person name="Miller J.R."/>
            <person name="Flanigan M.J."/>
            <person name="Edwards N.J."/>
            <person name="Bolanos R."/>
            <person name="Fasulo D."/>
            <person name="Halldorsson B.V."/>
            <person name="Hannenhalli S."/>
            <person name="Turner R."/>
            <person name="Yooseph S."/>
            <person name="Lu F."/>
            <person name="Nusskern D.R."/>
            <person name="Shue B.C."/>
            <person name="Zheng X.H."/>
            <person name="Zhong F."/>
            <person name="Delcher A.L."/>
            <person name="Huson D.H."/>
            <person name="Kravitz S.A."/>
            <person name="Mouchard L."/>
            <person name="Reinert K."/>
            <person name="Remington K.A."/>
            <person name="Clark A.G."/>
            <person name="Waterman M.S."/>
            <person name="Eichler E.E."/>
            <person name="Adams M.D."/>
            <person name="Hunkapiller M.W."/>
            <person name="Myers E.W."/>
            <person name="Venter J.C."/>
        </authorList>
    </citation>
    <scope>NUCLEOTIDE SEQUENCE [LARGE SCALE GENOMIC DNA]</scope>
</reference>
<reference key="7">
    <citation type="journal article" date="2004" name="Genome Res.">
        <title>The status, quality, and expansion of the NIH full-length cDNA project: the Mammalian Gene Collection (MGC).</title>
        <authorList>
            <consortium name="The MGC Project Team"/>
        </authorList>
    </citation>
    <scope>NUCLEOTIDE SEQUENCE [LARGE SCALE MRNA] (ISOFORM III)</scope>
    <source>
        <tissue>Placenta</tissue>
    </source>
</reference>
<reference key="8">
    <citation type="journal article" date="1999" name="Hum. Mutat.">
        <title>Molecular basis of albinism: mutations and polymorphisms of pigmentation genes associated with albinism.</title>
        <authorList>
            <person name="Oetting W.S."/>
            <person name="King R.A."/>
        </authorList>
    </citation>
    <scope>REVIEW ON HPS1 VARIANTS</scope>
</reference>
<reference key="9">
    <citation type="journal article" date="2010" name="J. Biol. Chem.">
        <title>Assembly of the biogenesis of lysosome-related organelles complex-3 (BLOC-3) and its interaction with Rab9.</title>
        <authorList>
            <person name="Kloer D.P."/>
            <person name="Rojas R."/>
            <person name="Ivan V."/>
            <person name="Moriyama K."/>
            <person name="van Vlijmen T."/>
            <person name="Murthy N."/>
            <person name="Ghirlando R."/>
            <person name="van der Sluijs P."/>
            <person name="Hurley J.H."/>
            <person name="Bonifacino J.S."/>
        </authorList>
    </citation>
    <scope>SUBUNIT</scope>
    <scope>LACK OF INTERACTION WITH RAB9A</scope>
</reference>
<reference key="10">
    <citation type="journal article" date="2012" name="Curr. Biol.">
        <title>BLOC-3 mutated in Hermansky-Pudlak syndrome is a Rab32/38 guanine nucleotide exchange factor.</title>
        <authorList>
            <person name="Gerondopoulos A."/>
            <person name="Langemeyer L."/>
            <person name="Liang J.R."/>
            <person name="Linford A."/>
            <person name="Barr F.A."/>
        </authorList>
    </citation>
    <scope>FUNCTION</scope>
    <scope>SUBUNIT</scope>
</reference>
<reference key="11">
    <citation type="journal article" date="1998" name="Am. J. Hum. Genet.">
        <title>Mutation analysis of patients with Hermansky-Pudlak syndrome: a frameshift hot spot in the HPS gene and apparent locus heterogeneity.</title>
        <authorList>
            <person name="Oh J."/>
            <person name="Ho L."/>
            <person name="Ala-Mello S."/>
            <person name="Amato D."/>
            <person name="Armstrong L."/>
            <person name="Bellucci S."/>
            <person name="Carakushansky G."/>
            <person name="Ellis J.P."/>
            <person name="Fong C.-T."/>
            <person name="Green J.S."/>
            <person name="Heon E."/>
            <person name="Legius E."/>
            <person name="Levin A.V."/>
            <person name="Nieuwenhuis H.K."/>
            <person name="Pinckers A."/>
            <person name="Tamura N."/>
            <person name="Whiteford M.L."/>
            <person name="Yamasaki H."/>
            <person name="Spritz R.A."/>
        </authorList>
    </citation>
    <scope>VARIANT HPS1 ILE-55 DEL</scope>
</reference>